<evidence type="ECO:0000269" key="1">
    <source>
    </source>
</evidence>
<evidence type="ECO:0000303" key="2">
    <source>
    </source>
</evidence>
<evidence type="ECO:0000305" key="3"/>
<sequence length="10" mass="966">SMIGGVMSKG</sequence>
<dbReference type="EC" id="1.6.3.-"/>
<dbReference type="STRING" id="7091.P84517"/>
<dbReference type="InParanoid" id="P84517"/>
<dbReference type="Proteomes" id="UP000005204">
    <property type="component" value="Unassembled WGS sequence"/>
</dbReference>
<dbReference type="GO" id="GO:0016491">
    <property type="term" value="F:oxidoreductase activity"/>
    <property type="evidence" value="ECO:0007669"/>
    <property type="project" value="UniProtKB-KW"/>
</dbReference>
<dbReference type="GO" id="GO:0050688">
    <property type="term" value="P:regulation of defense response to virus"/>
    <property type="evidence" value="ECO:0007669"/>
    <property type="project" value="UniProtKB-KW"/>
</dbReference>
<proteinExistence type="evidence at protein level"/>
<reference evidence="3" key="1">
    <citation type="journal article" date="2007" name="Biosci. Biotechnol. Biochem.">
        <title>Identification of a soluble NADPH oxidoreductase (BmNOX) with antiviral activities in the gut juice of Bombyx mori.</title>
        <authorList>
            <person name="Selot R."/>
            <person name="Kumar V."/>
            <person name="Shukla S."/>
            <person name="Chandrakuntal K."/>
            <person name="Brahmaraju M."/>
            <person name="Dandin S.B."/>
            <person name="Laloraya M."/>
            <person name="Kumar P.G."/>
        </authorList>
    </citation>
    <scope>PROTEIN SEQUENCE</scope>
    <scope>FUNCTION</scope>
    <scope>MASS SPECTROMETRY</scope>
    <source>
        <strain evidence="1">TX</strain>
        <tissue evidence="1">Gut juice</tissue>
    </source>
</reference>
<accession>P84517</accession>
<organism>
    <name type="scientific">Bombyx mori</name>
    <name type="common">Silk moth</name>
    <dbReference type="NCBI Taxonomy" id="7091"/>
    <lineage>
        <taxon>Eukaryota</taxon>
        <taxon>Metazoa</taxon>
        <taxon>Ecdysozoa</taxon>
        <taxon>Arthropoda</taxon>
        <taxon>Hexapoda</taxon>
        <taxon>Insecta</taxon>
        <taxon>Pterygota</taxon>
        <taxon>Neoptera</taxon>
        <taxon>Endopterygota</taxon>
        <taxon>Lepidoptera</taxon>
        <taxon>Glossata</taxon>
        <taxon>Ditrysia</taxon>
        <taxon>Bombycoidea</taxon>
        <taxon>Bombycidae</taxon>
        <taxon>Bombycinae</taxon>
        <taxon>Bombyx</taxon>
    </lineage>
</organism>
<comment type="function">
    <text evidence="1">NADPH oxidoreductase. Has antiviral activity against BmNPV.</text>
</comment>
<comment type="mass spectrometry" mass="26559.8" method="MALDI" evidence="1"/>
<comment type="miscellaneous">
    <text evidence="1">Expressed at high levels in BmNPV-resistant strains. Expressed at lower levels in moderately resistant and susceptible strains.</text>
</comment>
<name>NOX_BOMMO</name>
<keyword id="KW-0930">Antiviral protein</keyword>
<keyword id="KW-0903">Direct protein sequencing</keyword>
<keyword id="KW-0521">NADP</keyword>
<keyword id="KW-0560">Oxidoreductase</keyword>
<keyword id="KW-1185">Reference proteome</keyword>
<protein>
    <recommendedName>
        <fullName>NADPH oxidoreductase</fullName>
        <ecNumber>1.6.3.-</ecNumber>
    </recommendedName>
    <alternativeName>
        <fullName>BmNOX</fullName>
    </alternativeName>
</protein>
<feature type="chain" id="PRO_0000118007" description="NADPH oxidoreductase">
    <location>
        <begin position="1"/>
        <end position="10" status="greater than"/>
    </location>
</feature>
<feature type="non-terminal residue" evidence="2">
    <location>
        <position position="10"/>
    </location>
</feature>